<accession>Q42330</accession>
<accession>Q9SX84</accession>
<proteinExistence type="inferred from homology"/>
<comment type="subcellular location">
    <subcellularLocation>
        <location evidence="1">Secreted</location>
    </subcellularLocation>
</comment>
<comment type="alternative products">
    <event type="alternative splicing"/>
    <isoform>
        <id>Q42330-1</id>
        <name>1</name>
        <sequence type="displayed"/>
    </isoform>
    <text>A number of isoforms are produced. According to EST sequences.</text>
</comment>
<comment type="similarity">
    <text evidence="3">Belongs to the DEFL family. Protease inhibitor I18 (RTI/MTI-2) subfamily.</text>
</comment>
<comment type="caution">
    <text evidence="4">Was initially thought to be a protease inhibitor.</text>
</comment>
<gene>
    <name type="primary">ATTI7</name>
    <name type="ordered locus">At1g47540</name>
    <name type="ORF">F16N3.19</name>
</gene>
<dbReference type="EMBL" id="AC007519">
    <property type="protein sequence ID" value="AAD46033.1"/>
    <property type="molecule type" value="Genomic_DNA"/>
</dbReference>
<dbReference type="EMBL" id="CP002684">
    <property type="protein sequence ID" value="AEE32182.1"/>
    <property type="molecule type" value="Genomic_DNA"/>
</dbReference>
<dbReference type="EMBL" id="AY064025">
    <property type="protein sequence ID" value="AAL36381.1"/>
    <property type="molecule type" value="mRNA"/>
</dbReference>
<dbReference type="EMBL" id="AY117189">
    <property type="protein sequence ID" value="AAM51264.1"/>
    <property type="molecule type" value="mRNA"/>
</dbReference>
<dbReference type="EMBL" id="Z47386">
    <property type="protein sequence ID" value="CAA87459.1"/>
    <property type="molecule type" value="mRNA"/>
</dbReference>
<dbReference type="PIR" id="G96515">
    <property type="entry name" value="G96515"/>
</dbReference>
<dbReference type="RefSeq" id="NP_175185.1">
    <molecule id="Q42330-1"/>
    <property type="nucleotide sequence ID" value="NM_103647.5"/>
</dbReference>
<dbReference type="SMR" id="Q42330"/>
<dbReference type="BioGRID" id="26388">
    <property type="interactions" value="1"/>
</dbReference>
<dbReference type="FunCoup" id="Q42330">
    <property type="interactions" value="17"/>
</dbReference>
<dbReference type="STRING" id="3702.Q42330"/>
<dbReference type="PaxDb" id="3702-AT1G47540.2"/>
<dbReference type="ProteomicsDB" id="224183">
    <molecule id="Q42330-1"/>
</dbReference>
<dbReference type="EnsemblPlants" id="AT1G47540.1">
    <molecule id="Q42330-1"/>
    <property type="protein sequence ID" value="AT1G47540.1"/>
    <property type="gene ID" value="AT1G47540"/>
</dbReference>
<dbReference type="GeneID" id="841163"/>
<dbReference type="Gramene" id="AT1G47540.1">
    <molecule id="Q42330-1"/>
    <property type="protein sequence ID" value="AT1G47540.1"/>
    <property type="gene ID" value="AT1G47540"/>
</dbReference>
<dbReference type="KEGG" id="ath:AT1G47540"/>
<dbReference type="Araport" id="AT1G47540"/>
<dbReference type="TAIR" id="AT1G47540"/>
<dbReference type="HOGENOM" id="CLU_181760_0_0_1"/>
<dbReference type="InParanoid" id="Q42330"/>
<dbReference type="OMA" id="FRRCRED"/>
<dbReference type="OrthoDB" id="1052518at2759"/>
<dbReference type="PhylomeDB" id="Q42330"/>
<dbReference type="PRO" id="PR:Q42330"/>
<dbReference type="Proteomes" id="UP000006548">
    <property type="component" value="Chromosome 1"/>
</dbReference>
<dbReference type="ExpressionAtlas" id="Q42330">
    <property type="expression patterns" value="baseline and differential"/>
</dbReference>
<dbReference type="GO" id="GO:0005576">
    <property type="term" value="C:extracellular region"/>
    <property type="evidence" value="ECO:0007669"/>
    <property type="project" value="UniProtKB-SubCell"/>
</dbReference>
<dbReference type="GO" id="GO:0019871">
    <property type="term" value="F:sodium channel inhibitor activity"/>
    <property type="evidence" value="ECO:0007669"/>
    <property type="project" value="InterPro"/>
</dbReference>
<dbReference type="GO" id="GO:0050832">
    <property type="term" value="P:defense response to fungus"/>
    <property type="evidence" value="ECO:0007669"/>
    <property type="project" value="UniProtKB-KW"/>
</dbReference>
<dbReference type="GO" id="GO:0031640">
    <property type="term" value="P:killing of cells of another organism"/>
    <property type="evidence" value="ECO:0007669"/>
    <property type="project" value="UniProtKB-KW"/>
</dbReference>
<dbReference type="Gene3D" id="3.30.30.10">
    <property type="entry name" value="Knottin, scorpion toxin-like"/>
    <property type="match status" value="1"/>
</dbReference>
<dbReference type="InterPro" id="IPR003614">
    <property type="entry name" value="Scorpion_toxin-like"/>
</dbReference>
<dbReference type="InterPro" id="IPR036574">
    <property type="entry name" value="Scorpion_toxin-like_sf"/>
</dbReference>
<dbReference type="InterPro" id="IPR002061">
    <property type="entry name" value="Scorpion_toxinL/defensin"/>
</dbReference>
<dbReference type="Pfam" id="PF00537">
    <property type="entry name" value="Toxin_3"/>
    <property type="match status" value="1"/>
</dbReference>
<dbReference type="SMART" id="SM00505">
    <property type="entry name" value="Knot1"/>
    <property type="match status" value="1"/>
</dbReference>
<dbReference type="SUPFAM" id="SSF57095">
    <property type="entry name" value="Scorpion toxin-like"/>
    <property type="match status" value="1"/>
</dbReference>
<organism>
    <name type="scientific">Arabidopsis thaliana</name>
    <name type="common">Mouse-ear cress</name>
    <dbReference type="NCBI Taxonomy" id="3702"/>
    <lineage>
        <taxon>Eukaryota</taxon>
        <taxon>Viridiplantae</taxon>
        <taxon>Streptophyta</taxon>
        <taxon>Embryophyta</taxon>
        <taxon>Tracheophyta</taxon>
        <taxon>Spermatophyta</taxon>
        <taxon>Magnoliopsida</taxon>
        <taxon>eudicotyledons</taxon>
        <taxon>Gunneridae</taxon>
        <taxon>Pentapetalae</taxon>
        <taxon>rosids</taxon>
        <taxon>malvids</taxon>
        <taxon>Brassicales</taxon>
        <taxon>Brassicaceae</taxon>
        <taxon>Camelineae</taxon>
        <taxon>Arabidopsis</taxon>
    </lineage>
</organism>
<sequence length="98" mass="10993">MATKSVSTFAIFFILVLAIFETPEIEAYDRKCLKEYGGDVGFSYCAPRIFPTFCDQNCRKNKGAKGGVCRWEENNAIGVKCLCNFCSEEPSDQTLSRI</sequence>
<feature type="signal peptide" evidence="2">
    <location>
        <begin position="1"/>
        <end position="27"/>
    </location>
</feature>
<feature type="chain" id="PRO_0000031092" description="Defensin-like protein 192">
    <location>
        <begin position="28"/>
        <end position="98"/>
    </location>
</feature>
<feature type="site" description="Reactive bond" evidence="1">
    <location>
        <begin position="48"/>
        <end position="49"/>
    </location>
</feature>
<feature type="disulfide bond" evidence="1">
    <location>
        <begin position="32"/>
        <end position="86"/>
    </location>
</feature>
<feature type="disulfide bond" evidence="1">
    <location>
        <begin position="45"/>
        <end position="69"/>
    </location>
</feature>
<feature type="disulfide bond" evidence="1">
    <location>
        <begin position="54"/>
        <end position="81"/>
    </location>
</feature>
<feature type="disulfide bond" evidence="1">
    <location>
        <begin position="58"/>
        <end position="83"/>
    </location>
</feature>
<keyword id="KW-0025">Alternative splicing</keyword>
<keyword id="KW-0929">Antimicrobial</keyword>
<keyword id="KW-1015">Disulfide bond</keyword>
<keyword id="KW-0295">Fungicide</keyword>
<keyword id="KW-0611">Plant defense</keyword>
<keyword id="KW-1185">Reference proteome</keyword>
<keyword id="KW-0964">Secreted</keyword>
<keyword id="KW-0732">Signal</keyword>
<reference key="1">
    <citation type="journal article" date="2000" name="Nature">
        <title>Sequence and analysis of chromosome 1 of the plant Arabidopsis thaliana.</title>
        <authorList>
            <person name="Theologis A."/>
            <person name="Ecker J.R."/>
            <person name="Palm C.J."/>
            <person name="Federspiel N.A."/>
            <person name="Kaul S."/>
            <person name="White O."/>
            <person name="Alonso J."/>
            <person name="Altafi H."/>
            <person name="Araujo R."/>
            <person name="Bowman C.L."/>
            <person name="Brooks S.Y."/>
            <person name="Buehler E."/>
            <person name="Chan A."/>
            <person name="Chao Q."/>
            <person name="Chen H."/>
            <person name="Cheuk R.F."/>
            <person name="Chin C.W."/>
            <person name="Chung M.K."/>
            <person name="Conn L."/>
            <person name="Conway A.B."/>
            <person name="Conway A.R."/>
            <person name="Creasy T.H."/>
            <person name="Dewar K."/>
            <person name="Dunn P."/>
            <person name="Etgu P."/>
            <person name="Feldblyum T.V."/>
            <person name="Feng J.-D."/>
            <person name="Fong B."/>
            <person name="Fujii C.Y."/>
            <person name="Gill J.E."/>
            <person name="Goldsmith A.D."/>
            <person name="Haas B."/>
            <person name="Hansen N.F."/>
            <person name="Hughes B."/>
            <person name="Huizar L."/>
            <person name="Hunter J.L."/>
            <person name="Jenkins J."/>
            <person name="Johnson-Hopson C."/>
            <person name="Khan S."/>
            <person name="Khaykin E."/>
            <person name="Kim C.J."/>
            <person name="Koo H.L."/>
            <person name="Kremenetskaia I."/>
            <person name="Kurtz D.B."/>
            <person name="Kwan A."/>
            <person name="Lam B."/>
            <person name="Langin-Hooper S."/>
            <person name="Lee A."/>
            <person name="Lee J.M."/>
            <person name="Lenz C.A."/>
            <person name="Li J.H."/>
            <person name="Li Y.-P."/>
            <person name="Lin X."/>
            <person name="Liu S.X."/>
            <person name="Liu Z.A."/>
            <person name="Luros J.S."/>
            <person name="Maiti R."/>
            <person name="Marziali A."/>
            <person name="Militscher J."/>
            <person name="Miranda M."/>
            <person name="Nguyen M."/>
            <person name="Nierman W.C."/>
            <person name="Osborne B.I."/>
            <person name="Pai G."/>
            <person name="Peterson J."/>
            <person name="Pham P.K."/>
            <person name="Rizzo M."/>
            <person name="Rooney T."/>
            <person name="Rowley D."/>
            <person name="Sakano H."/>
            <person name="Salzberg S.L."/>
            <person name="Schwartz J.R."/>
            <person name="Shinn P."/>
            <person name="Southwick A.M."/>
            <person name="Sun H."/>
            <person name="Tallon L.J."/>
            <person name="Tambunga G."/>
            <person name="Toriumi M.J."/>
            <person name="Town C.D."/>
            <person name="Utterback T."/>
            <person name="Van Aken S."/>
            <person name="Vaysberg M."/>
            <person name="Vysotskaia V.S."/>
            <person name="Walker M."/>
            <person name="Wu D."/>
            <person name="Yu G."/>
            <person name="Fraser C.M."/>
            <person name="Venter J.C."/>
            <person name="Davis R.W."/>
        </authorList>
    </citation>
    <scope>NUCLEOTIDE SEQUENCE [LARGE SCALE GENOMIC DNA]</scope>
    <source>
        <strain>cv. Columbia</strain>
    </source>
</reference>
<reference key="2">
    <citation type="journal article" date="2017" name="Plant J.">
        <title>Araport11: a complete reannotation of the Arabidopsis thaliana reference genome.</title>
        <authorList>
            <person name="Cheng C.Y."/>
            <person name="Krishnakumar V."/>
            <person name="Chan A.P."/>
            <person name="Thibaud-Nissen F."/>
            <person name="Schobel S."/>
            <person name="Town C.D."/>
        </authorList>
    </citation>
    <scope>GENOME REANNOTATION</scope>
    <source>
        <strain>cv. Columbia</strain>
    </source>
</reference>
<reference key="3">
    <citation type="journal article" date="2003" name="Science">
        <title>Empirical analysis of transcriptional activity in the Arabidopsis genome.</title>
        <authorList>
            <person name="Yamada K."/>
            <person name="Lim J."/>
            <person name="Dale J.M."/>
            <person name="Chen H."/>
            <person name="Shinn P."/>
            <person name="Palm C.J."/>
            <person name="Southwick A.M."/>
            <person name="Wu H.C."/>
            <person name="Kim C.J."/>
            <person name="Nguyen M."/>
            <person name="Pham P.K."/>
            <person name="Cheuk R.F."/>
            <person name="Karlin-Newmann G."/>
            <person name="Liu S.X."/>
            <person name="Lam B."/>
            <person name="Sakano H."/>
            <person name="Wu T."/>
            <person name="Yu G."/>
            <person name="Miranda M."/>
            <person name="Quach H.L."/>
            <person name="Tripp M."/>
            <person name="Chang C.H."/>
            <person name="Lee J.M."/>
            <person name="Toriumi M.J."/>
            <person name="Chan M.M."/>
            <person name="Tang C.C."/>
            <person name="Onodera C.S."/>
            <person name="Deng J.M."/>
            <person name="Akiyama K."/>
            <person name="Ansari Y."/>
            <person name="Arakawa T."/>
            <person name="Banh J."/>
            <person name="Banno F."/>
            <person name="Bowser L."/>
            <person name="Brooks S.Y."/>
            <person name="Carninci P."/>
            <person name="Chao Q."/>
            <person name="Choy N."/>
            <person name="Enju A."/>
            <person name="Goldsmith A.D."/>
            <person name="Gurjal M."/>
            <person name="Hansen N.F."/>
            <person name="Hayashizaki Y."/>
            <person name="Johnson-Hopson C."/>
            <person name="Hsuan V.W."/>
            <person name="Iida K."/>
            <person name="Karnes M."/>
            <person name="Khan S."/>
            <person name="Koesema E."/>
            <person name="Ishida J."/>
            <person name="Jiang P.X."/>
            <person name="Jones T."/>
            <person name="Kawai J."/>
            <person name="Kamiya A."/>
            <person name="Meyers C."/>
            <person name="Nakajima M."/>
            <person name="Narusaka M."/>
            <person name="Seki M."/>
            <person name="Sakurai T."/>
            <person name="Satou M."/>
            <person name="Tamse R."/>
            <person name="Vaysberg M."/>
            <person name="Wallender E.K."/>
            <person name="Wong C."/>
            <person name="Yamamura Y."/>
            <person name="Yuan S."/>
            <person name="Shinozaki K."/>
            <person name="Davis R.W."/>
            <person name="Theologis A."/>
            <person name="Ecker J.R."/>
        </authorList>
    </citation>
    <scope>NUCLEOTIDE SEQUENCE [LARGE SCALE MRNA]</scope>
    <source>
        <strain>cv. Columbia</strain>
    </source>
</reference>
<reference key="4">
    <citation type="journal article" date="1996" name="Plant J.">
        <title>Further progress towards a catalogue of all Arabidopsis genes: analysis of a set of 5000 non-redundant ESTs.</title>
        <authorList>
            <person name="Cooke R."/>
            <person name="Raynal M."/>
            <person name="Laudie M."/>
            <person name="Grellet F."/>
            <person name="Delseny M."/>
            <person name="Morris P.-C."/>
            <person name="Guerrier D."/>
            <person name="Giraudat J."/>
            <person name="Quigley F."/>
            <person name="Clabault G."/>
            <person name="Li Y.-F."/>
            <person name="Mache R."/>
            <person name="Krivitzky M."/>
            <person name="Gy I.J.-J."/>
            <person name="Kreis M."/>
            <person name="Lecharny A."/>
            <person name="Parmentier Y."/>
            <person name="Marbach J."/>
            <person name="Fleck J."/>
            <person name="Clement B."/>
            <person name="Philipps G."/>
            <person name="Herve C."/>
            <person name="Bardet C."/>
            <person name="Tremousaygue D."/>
            <person name="Lescure B."/>
            <person name="Lacomme C."/>
            <person name="Roby D."/>
            <person name="Jourjon M.-F."/>
            <person name="Chabrier P."/>
            <person name="Charpenteau J.-L."/>
            <person name="Desprez T."/>
            <person name="Amselem J."/>
            <person name="Chiapello H."/>
            <person name="Hoefte H."/>
        </authorList>
    </citation>
    <scope>NUCLEOTIDE SEQUENCE [LARGE SCALE MRNA] OF 2-98</scope>
    <source>
        <strain>cv. Columbia</strain>
        <tissue>Dry seed</tissue>
    </source>
</reference>
<reference key="5">
    <citation type="journal article" date="2004" name="Genetics">
        <title>Functional divergence in tandemly duplicated Arabidopsis thaliana trypsin inhibitor genes.</title>
        <authorList>
            <person name="Clauss M.J."/>
            <person name="Mitchell-Olds T."/>
        </authorList>
    </citation>
    <scope>GENE FAMILY</scope>
    <scope>NOMENCLATURE</scope>
</reference>
<reference key="6">
    <citation type="journal article" date="2005" name="Plant Physiol.">
        <title>Genome organization of more than 300 defensin-like genes in Arabidopsis.</title>
        <authorList>
            <person name="Silverstein K.A.T."/>
            <person name="Graham M.A."/>
            <person name="Paape T.D."/>
            <person name="VandenBosch K.A."/>
        </authorList>
    </citation>
    <scope>GENE FAMILY</scope>
</reference>
<protein>
    <recommendedName>
        <fullName>Defensin-like protein 192</fullName>
    </recommendedName>
    <alternativeName>
        <fullName>Trypsin inhibitor ATTI-7</fullName>
    </alternativeName>
</protein>
<evidence type="ECO:0000250" key="1"/>
<evidence type="ECO:0000255" key="2"/>
<evidence type="ECO:0000305" key="3"/>
<evidence type="ECO:0000305" key="4">
    <source>
    </source>
</evidence>
<name>DF192_ARATH</name>